<feature type="chain" id="PRO_0000336537" description="Protein Cmaq_1209">
    <location>
        <begin position="1"/>
        <end position="257"/>
    </location>
</feature>
<comment type="similarity">
    <text evidence="1">Belongs to the CinA family.</text>
</comment>
<protein>
    <recommendedName>
        <fullName evidence="1">Protein Cmaq_1209</fullName>
    </recommendedName>
</protein>
<dbReference type="EMBL" id="CP000852">
    <property type="protein sequence ID" value="ABW02036.1"/>
    <property type="molecule type" value="Genomic_DNA"/>
</dbReference>
<dbReference type="RefSeq" id="WP_012186255.1">
    <property type="nucleotide sequence ID" value="NC_009954.1"/>
</dbReference>
<dbReference type="SMR" id="A8ME30"/>
<dbReference type="STRING" id="397948.Cmaq_1209"/>
<dbReference type="GeneID" id="5709278"/>
<dbReference type="KEGG" id="cma:Cmaq_1209"/>
<dbReference type="eggNOG" id="arCOG00215">
    <property type="taxonomic scope" value="Archaea"/>
</dbReference>
<dbReference type="HOGENOM" id="CLU_030805_0_5_2"/>
<dbReference type="OrthoDB" id="372037at2157"/>
<dbReference type="Proteomes" id="UP000001137">
    <property type="component" value="Chromosome"/>
</dbReference>
<dbReference type="CDD" id="cd00885">
    <property type="entry name" value="cinA"/>
    <property type="match status" value="1"/>
</dbReference>
<dbReference type="Gene3D" id="3.40.980.10">
    <property type="entry name" value="MoaB/Mog-like domain"/>
    <property type="match status" value="1"/>
</dbReference>
<dbReference type="HAMAP" id="MF_00226_A">
    <property type="entry name" value="CinA_A"/>
    <property type="match status" value="1"/>
</dbReference>
<dbReference type="InterPro" id="IPR050101">
    <property type="entry name" value="CinA"/>
</dbReference>
<dbReference type="InterPro" id="IPR023055">
    <property type="entry name" value="CinA_Arc"/>
</dbReference>
<dbReference type="InterPro" id="IPR036425">
    <property type="entry name" value="MoaB/Mog-like_dom_sf"/>
</dbReference>
<dbReference type="InterPro" id="IPR001453">
    <property type="entry name" value="MoaB/Mog_dom"/>
</dbReference>
<dbReference type="NCBIfam" id="NF002291">
    <property type="entry name" value="PRK01215.1"/>
    <property type="match status" value="1"/>
</dbReference>
<dbReference type="PANTHER" id="PTHR13939">
    <property type="entry name" value="NICOTINAMIDE-NUCLEOTIDE AMIDOHYDROLASE PNCC"/>
    <property type="match status" value="1"/>
</dbReference>
<dbReference type="PANTHER" id="PTHR13939:SF0">
    <property type="entry name" value="NMN AMIDOHYDROLASE-LIKE PROTEIN YFAY"/>
    <property type="match status" value="1"/>
</dbReference>
<dbReference type="Pfam" id="PF00994">
    <property type="entry name" value="MoCF_biosynth"/>
    <property type="match status" value="1"/>
</dbReference>
<dbReference type="SMART" id="SM00852">
    <property type="entry name" value="MoCF_biosynth"/>
    <property type="match status" value="1"/>
</dbReference>
<dbReference type="SUPFAM" id="SSF53218">
    <property type="entry name" value="Molybdenum cofactor biosynthesis proteins"/>
    <property type="match status" value="1"/>
</dbReference>
<reference key="1">
    <citation type="submission" date="2007-10" db="EMBL/GenBank/DDBJ databases">
        <title>Complete sequence of Caldivirga maquilingensis IC-167.</title>
        <authorList>
            <consortium name="US DOE Joint Genome Institute"/>
            <person name="Copeland A."/>
            <person name="Lucas S."/>
            <person name="Lapidus A."/>
            <person name="Barry K."/>
            <person name="Glavina del Rio T."/>
            <person name="Dalin E."/>
            <person name="Tice H."/>
            <person name="Pitluck S."/>
            <person name="Saunders E."/>
            <person name="Brettin T."/>
            <person name="Bruce D."/>
            <person name="Detter J.C."/>
            <person name="Han C."/>
            <person name="Schmutz J."/>
            <person name="Larimer F."/>
            <person name="Land M."/>
            <person name="Hauser L."/>
            <person name="Kyrpides N."/>
            <person name="Ivanova N."/>
            <person name="Biddle J.F."/>
            <person name="Zhang Z."/>
            <person name="Fitz-Gibbon S.T."/>
            <person name="Lowe T.M."/>
            <person name="Saltikov C."/>
            <person name="House C.H."/>
            <person name="Richardson P."/>
        </authorList>
    </citation>
    <scope>NUCLEOTIDE SEQUENCE [LARGE SCALE GENOMIC DNA]</scope>
    <source>
        <strain>ATCC 700844 / DSM 13496 / JCM 10307 / IC-167</strain>
    </source>
</reference>
<name>Y1209_CALMQ</name>
<gene>
    <name type="ordered locus">Cmaq_1209</name>
</gene>
<accession>A8ME30</accession>
<sequence>MRAYVITIGNEILKGRTINTNAAHIGRVLTYAGYDVIRMVVVPDEIDEIVWAFRDGLSRADLIVSTGGLGPTFDDKTVEALAKALNLELELNQEAFSMVKSKYDRLGVELTKERIKMAYMPKGAKPLPNPVGTAPGVYIEYAGKRILTLPGVPAEMEAILDEALPQLRVPGRYYYEESVVVRGIMESALAPVVNEVMRLNAGLVYVKSHPKGIEIDKPVVEVEVSASGSSEEEVRGRVKEAIRQLVSRAKSINPQCC</sequence>
<evidence type="ECO:0000255" key="1">
    <source>
        <dbReference type="HAMAP-Rule" id="MF_00226"/>
    </source>
</evidence>
<organism>
    <name type="scientific">Caldivirga maquilingensis (strain ATCC 700844 / DSM 13496 / JCM 10307 / IC-167)</name>
    <dbReference type="NCBI Taxonomy" id="397948"/>
    <lineage>
        <taxon>Archaea</taxon>
        <taxon>Thermoproteota</taxon>
        <taxon>Thermoprotei</taxon>
        <taxon>Thermoproteales</taxon>
        <taxon>Thermoproteaceae</taxon>
        <taxon>Caldivirga</taxon>
    </lineage>
</organism>
<proteinExistence type="inferred from homology"/>
<keyword id="KW-1185">Reference proteome</keyword>